<organism>
    <name type="scientific">Synechocystis sp. (strain ATCC 27184 / PCC 6803 / Kazusa)</name>
    <dbReference type="NCBI Taxonomy" id="1111708"/>
    <lineage>
        <taxon>Bacteria</taxon>
        <taxon>Bacillati</taxon>
        <taxon>Cyanobacteriota</taxon>
        <taxon>Cyanophyceae</taxon>
        <taxon>Synechococcales</taxon>
        <taxon>Merismopediaceae</taxon>
        <taxon>Synechocystis</taxon>
    </lineage>
</organism>
<protein>
    <recommendedName>
        <fullName evidence="1">4-hydroxy-tetrahydrodipicolinate reductase</fullName>
        <shortName evidence="1">HTPA reductase</shortName>
        <ecNumber evidence="1">1.17.1.8</ecNumber>
    </recommendedName>
</protein>
<comment type="function">
    <text evidence="1">Catalyzes the conversion of 4-hydroxy-tetrahydrodipicolinate (HTPA) to tetrahydrodipicolinate.</text>
</comment>
<comment type="catalytic activity">
    <reaction evidence="1">
        <text>(S)-2,3,4,5-tetrahydrodipicolinate + NAD(+) + H2O = (2S,4S)-4-hydroxy-2,3,4,5-tetrahydrodipicolinate + NADH + H(+)</text>
        <dbReference type="Rhea" id="RHEA:35323"/>
        <dbReference type="ChEBI" id="CHEBI:15377"/>
        <dbReference type="ChEBI" id="CHEBI:15378"/>
        <dbReference type="ChEBI" id="CHEBI:16845"/>
        <dbReference type="ChEBI" id="CHEBI:57540"/>
        <dbReference type="ChEBI" id="CHEBI:57945"/>
        <dbReference type="ChEBI" id="CHEBI:67139"/>
        <dbReference type="EC" id="1.17.1.8"/>
    </reaction>
</comment>
<comment type="catalytic activity">
    <reaction evidence="1">
        <text>(S)-2,3,4,5-tetrahydrodipicolinate + NADP(+) + H2O = (2S,4S)-4-hydroxy-2,3,4,5-tetrahydrodipicolinate + NADPH + H(+)</text>
        <dbReference type="Rhea" id="RHEA:35331"/>
        <dbReference type="ChEBI" id="CHEBI:15377"/>
        <dbReference type="ChEBI" id="CHEBI:15378"/>
        <dbReference type="ChEBI" id="CHEBI:16845"/>
        <dbReference type="ChEBI" id="CHEBI:57783"/>
        <dbReference type="ChEBI" id="CHEBI:58349"/>
        <dbReference type="ChEBI" id="CHEBI:67139"/>
        <dbReference type="EC" id="1.17.1.8"/>
    </reaction>
</comment>
<comment type="pathway">
    <text evidence="1">Amino-acid biosynthesis; L-lysine biosynthesis via DAP pathway; (S)-tetrahydrodipicolinate from L-aspartate: step 4/4.</text>
</comment>
<comment type="subcellular location">
    <subcellularLocation>
        <location evidence="1">Cytoplasm</location>
    </subcellularLocation>
</comment>
<comment type="similarity">
    <text evidence="1">Belongs to the DapB family.</text>
</comment>
<comment type="caution">
    <text evidence="2">Was originally thought to be a dihydrodipicolinate reductase (DHDPR), catalyzing the conversion of dihydrodipicolinate to tetrahydrodipicolinate. However, it was shown in E.coli that the substrate of the enzymatic reaction is not dihydrodipicolinate (DHDP) but in fact (2S,4S)-4-hydroxy-2,3,4,5-tetrahydrodipicolinic acid (HTPA), the product released by the DapA-catalyzed reaction.</text>
</comment>
<evidence type="ECO:0000255" key="1">
    <source>
        <dbReference type="HAMAP-Rule" id="MF_00102"/>
    </source>
</evidence>
<evidence type="ECO:0000305" key="2"/>
<proteinExistence type="inferred from homology"/>
<keyword id="KW-0028">Amino-acid biosynthesis</keyword>
<keyword id="KW-0963">Cytoplasm</keyword>
<keyword id="KW-0220">Diaminopimelate biosynthesis</keyword>
<keyword id="KW-0457">Lysine biosynthesis</keyword>
<keyword id="KW-0520">NAD</keyword>
<keyword id="KW-0521">NADP</keyword>
<keyword id="KW-0560">Oxidoreductase</keyword>
<keyword id="KW-1185">Reference proteome</keyword>
<sequence length="275" mass="29091">MANQDLIPVVVNGAAGKMGREVIKAVAQAPDLQLVGAVDHNPSLQGQDIGEVVGIAPLEVPVLADLQSVLVLATQEKIQGVMVDFTHPSGVYDNVRSAIAYGVRPVVGTTGLSEQQIQDLGDFAEKASTGCLIAPNFAIGVLLMQQAAVQACQYFDHVEIIELHHNQKADAPSGTAIKTAQMLAEMGKTFNPPAVEEKETIAGAKGGLGPGQIPIHSIRLPGLIAHQEVLFGSPGQLYTIRHDTTDRACYMPGVLLGIRKVVELKGLVYGLEKLL</sequence>
<feature type="chain" id="PRO_0000141501" description="4-hydroxy-tetrahydrodipicolinate reductase">
    <location>
        <begin position="1"/>
        <end position="275"/>
    </location>
</feature>
<feature type="active site" description="Proton donor/acceptor" evidence="1">
    <location>
        <position position="164"/>
    </location>
</feature>
<feature type="active site" description="Proton donor" evidence="1">
    <location>
        <position position="168"/>
    </location>
</feature>
<feature type="binding site" evidence="1">
    <location>
        <begin position="13"/>
        <end position="18"/>
    </location>
    <ligand>
        <name>NAD(+)</name>
        <dbReference type="ChEBI" id="CHEBI:57540"/>
    </ligand>
</feature>
<feature type="binding site" evidence="1">
    <location>
        <begin position="108"/>
        <end position="110"/>
    </location>
    <ligand>
        <name>NAD(+)</name>
        <dbReference type="ChEBI" id="CHEBI:57540"/>
    </ligand>
</feature>
<feature type="binding site" evidence="1">
    <location>
        <begin position="134"/>
        <end position="137"/>
    </location>
    <ligand>
        <name>NAD(+)</name>
        <dbReference type="ChEBI" id="CHEBI:57540"/>
    </ligand>
</feature>
<feature type="binding site" evidence="1">
    <location>
        <position position="165"/>
    </location>
    <ligand>
        <name>(S)-2,3,4,5-tetrahydrodipicolinate</name>
        <dbReference type="ChEBI" id="CHEBI:16845"/>
    </ligand>
</feature>
<feature type="binding site" evidence="1">
    <location>
        <begin position="174"/>
        <end position="175"/>
    </location>
    <ligand>
        <name>(S)-2,3,4,5-tetrahydrodipicolinate</name>
        <dbReference type="ChEBI" id="CHEBI:16845"/>
    </ligand>
</feature>
<dbReference type="EC" id="1.17.1.8" evidence="1"/>
<dbReference type="EMBL" id="BA000022">
    <property type="protein sequence ID" value="BAA16644.1"/>
    <property type="molecule type" value="Genomic_DNA"/>
</dbReference>
<dbReference type="PIR" id="S74492">
    <property type="entry name" value="S74492"/>
</dbReference>
<dbReference type="SMR" id="P72642"/>
<dbReference type="FunCoup" id="P72642">
    <property type="interactions" value="493"/>
</dbReference>
<dbReference type="IntAct" id="P72642">
    <property type="interactions" value="2"/>
</dbReference>
<dbReference type="STRING" id="1148.gene:10497499"/>
<dbReference type="PaxDb" id="1148-1651716"/>
<dbReference type="EnsemblBacteria" id="BAA16644">
    <property type="protein sequence ID" value="BAA16644"/>
    <property type="gene ID" value="BAA16644"/>
</dbReference>
<dbReference type="KEGG" id="syn:sll1058"/>
<dbReference type="eggNOG" id="COG0289">
    <property type="taxonomic scope" value="Bacteria"/>
</dbReference>
<dbReference type="InParanoid" id="P72642"/>
<dbReference type="PhylomeDB" id="P72642"/>
<dbReference type="UniPathway" id="UPA00034">
    <property type="reaction ID" value="UER00018"/>
</dbReference>
<dbReference type="Proteomes" id="UP000001425">
    <property type="component" value="Chromosome"/>
</dbReference>
<dbReference type="GO" id="GO:0005829">
    <property type="term" value="C:cytosol"/>
    <property type="evidence" value="ECO:0000318"/>
    <property type="project" value="GO_Central"/>
</dbReference>
<dbReference type="GO" id="GO:0008839">
    <property type="term" value="F:4-hydroxy-tetrahydrodipicolinate reductase"/>
    <property type="evidence" value="ECO:0000318"/>
    <property type="project" value="GO_Central"/>
</dbReference>
<dbReference type="GO" id="GO:0051287">
    <property type="term" value="F:NAD binding"/>
    <property type="evidence" value="ECO:0007669"/>
    <property type="project" value="UniProtKB-UniRule"/>
</dbReference>
<dbReference type="GO" id="GO:0050661">
    <property type="term" value="F:NADP binding"/>
    <property type="evidence" value="ECO:0007669"/>
    <property type="project" value="UniProtKB-UniRule"/>
</dbReference>
<dbReference type="GO" id="GO:0016726">
    <property type="term" value="F:oxidoreductase activity, acting on CH or CH2 groups, NAD or NADP as acceptor"/>
    <property type="evidence" value="ECO:0007669"/>
    <property type="project" value="UniProtKB-UniRule"/>
</dbReference>
<dbReference type="GO" id="GO:0019877">
    <property type="term" value="P:diaminopimelate biosynthetic process"/>
    <property type="evidence" value="ECO:0000318"/>
    <property type="project" value="GO_Central"/>
</dbReference>
<dbReference type="GO" id="GO:0009089">
    <property type="term" value="P:lysine biosynthetic process via diaminopimelate"/>
    <property type="evidence" value="ECO:0007669"/>
    <property type="project" value="UniProtKB-UniRule"/>
</dbReference>
<dbReference type="CDD" id="cd02274">
    <property type="entry name" value="DHDPR_N"/>
    <property type="match status" value="1"/>
</dbReference>
<dbReference type="FunFam" id="3.30.360.10:FF:000009">
    <property type="entry name" value="4-hydroxy-tetrahydrodipicolinate reductase"/>
    <property type="match status" value="1"/>
</dbReference>
<dbReference type="Gene3D" id="3.30.360.10">
    <property type="entry name" value="Dihydrodipicolinate Reductase, domain 2"/>
    <property type="match status" value="1"/>
</dbReference>
<dbReference type="Gene3D" id="3.40.50.720">
    <property type="entry name" value="NAD(P)-binding Rossmann-like Domain"/>
    <property type="match status" value="1"/>
</dbReference>
<dbReference type="HAMAP" id="MF_00102">
    <property type="entry name" value="DapB"/>
    <property type="match status" value="1"/>
</dbReference>
<dbReference type="InterPro" id="IPR022663">
    <property type="entry name" value="DapB_C"/>
</dbReference>
<dbReference type="InterPro" id="IPR000846">
    <property type="entry name" value="DapB_N"/>
</dbReference>
<dbReference type="InterPro" id="IPR022664">
    <property type="entry name" value="DapB_N_CS"/>
</dbReference>
<dbReference type="InterPro" id="IPR023940">
    <property type="entry name" value="DHDPR_bac"/>
</dbReference>
<dbReference type="InterPro" id="IPR036291">
    <property type="entry name" value="NAD(P)-bd_dom_sf"/>
</dbReference>
<dbReference type="NCBIfam" id="TIGR00036">
    <property type="entry name" value="dapB"/>
    <property type="match status" value="1"/>
</dbReference>
<dbReference type="PANTHER" id="PTHR20836:SF0">
    <property type="entry name" value="4-HYDROXY-TETRAHYDRODIPICOLINATE REDUCTASE 1, CHLOROPLASTIC-RELATED"/>
    <property type="match status" value="1"/>
</dbReference>
<dbReference type="PANTHER" id="PTHR20836">
    <property type="entry name" value="DIHYDRODIPICOLINATE REDUCTASE"/>
    <property type="match status" value="1"/>
</dbReference>
<dbReference type="Pfam" id="PF05173">
    <property type="entry name" value="DapB_C"/>
    <property type="match status" value="1"/>
</dbReference>
<dbReference type="Pfam" id="PF01113">
    <property type="entry name" value="DapB_N"/>
    <property type="match status" value="1"/>
</dbReference>
<dbReference type="PIRSF" id="PIRSF000161">
    <property type="entry name" value="DHPR"/>
    <property type="match status" value="1"/>
</dbReference>
<dbReference type="SUPFAM" id="SSF55347">
    <property type="entry name" value="Glyceraldehyde-3-phosphate dehydrogenase-like, C-terminal domain"/>
    <property type="match status" value="1"/>
</dbReference>
<dbReference type="SUPFAM" id="SSF51735">
    <property type="entry name" value="NAD(P)-binding Rossmann-fold domains"/>
    <property type="match status" value="1"/>
</dbReference>
<dbReference type="PROSITE" id="PS01298">
    <property type="entry name" value="DAPB"/>
    <property type="match status" value="1"/>
</dbReference>
<reference key="1">
    <citation type="journal article" date="1996" name="DNA Res.">
        <title>Sequence analysis of the genome of the unicellular cyanobacterium Synechocystis sp. strain PCC6803. II. Sequence determination of the entire genome and assignment of potential protein-coding regions.</title>
        <authorList>
            <person name="Kaneko T."/>
            <person name="Sato S."/>
            <person name="Kotani H."/>
            <person name="Tanaka A."/>
            <person name="Asamizu E."/>
            <person name="Nakamura Y."/>
            <person name="Miyajima N."/>
            <person name="Hirosawa M."/>
            <person name="Sugiura M."/>
            <person name="Sasamoto S."/>
            <person name="Kimura T."/>
            <person name="Hosouchi T."/>
            <person name="Matsuno A."/>
            <person name="Muraki A."/>
            <person name="Nakazaki N."/>
            <person name="Naruo K."/>
            <person name="Okumura S."/>
            <person name="Shimpo S."/>
            <person name="Takeuchi C."/>
            <person name="Wada T."/>
            <person name="Watanabe A."/>
            <person name="Yamada M."/>
            <person name="Yasuda M."/>
            <person name="Tabata S."/>
        </authorList>
    </citation>
    <scope>NUCLEOTIDE SEQUENCE [LARGE SCALE GENOMIC DNA]</scope>
    <source>
        <strain>ATCC 27184 / PCC 6803 / Kazusa</strain>
    </source>
</reference>
<accession>P72642</accession>
<gene>
    <name evidence="1" type="primary">dapB</name>
    <name type="ordered locus">sll1058</name>
</gene>
<name>DAPB_SYNY3</name>